<accession>O94654</accession>
<protein>
    <recommendedName>
        <fullName>Uncharacterized transporter C405.03c</fullName>
    </recommendedName>
</protein>
<reference key="1">
    <citation type="journal article" date="2002" name="Nature">
        <title>The genome sequence of Schizosaccharomyces pombe.</title>
        <authorList>
            <person name="Wood V."/>
            <person name="Gwilliam R."/>
            <person name="Rajandream M.A."/>
            <person name="Lyne M.H."/>
            <person name="Lyne R."/>
            <person name="Stewart A."/>
            <person name="Sgouros J.G."/>
            <person name="Peat N."/>
            <person name="Hayles J."/>
            <person name="Baker S.G."/>
            <person name="Basham D."/>
            <person name="Bowman S."/>
            <person name="Brooks K."/>
            <person name="Brown D."/>
            <person name="Brown S."/>
            <person name="Chillingworth T."/>
            <person name="Churcher C.M."/>
            <person name="Collins M."/>
            <person name="Connor R."/>
            <person name="Cronin A."/>
            <person name="Davis P."/>
            <person name="Feltwell T."/>
            <person name="Fraser A."/>
            <person name="Gentles S."/>
            <person name="Goble A."/>
            <person name="Hamlin N."/>
            <person name="Harris D.E."/>
            <person name="Hidalgo J."/>
            <person name="Hodgson G."/>
            <person name="Holroyd S."/>
            <person name="Hornsby T."/>
            <person name="Howarth S."/>
            <person name="Huckle E.J."/>
            <person name="Hunt S."/>
            <person name="Jagels K."/>
            <person name="James K.D."/>
            <person name="Jones L."/>
            <person name="Jones M."/>
            <person name="Leather S."/>
            <person name="McDonald S."/>
            <person name="McLean J."/>
            <person name="Mooney P."/>
            <person name="Moule S."/>
            <person name="Mungall K.L."/>
            <person name="Murphy L.D."/>
            <person name="Niblett D."/>
            <person name="Odell C."/>
            <person name="Oliver K."/>
            <person name="O'Neil S."/>
            <person name="Pearson D."/>
            <person name="Quail M.A."/>
            <person name="Rabbinowitsch E."/>
            <person name="Rutherford K.M."/>
            <person name="Rutter S."/>
            <person name="Saunders D."/>
            <person name="Seeger K."/>
            <person name="Sharp S."/>
            <person name="Skelton J."/>
            <person name="Simmonds M.N."/>
            <person name="Squares R."/>
            <person name="Squares S."/>
            <person name="Stevens K."/>
            <person name="Taylor K."/>
            <person name="Taylor R.G."/>
            <person name="Tivey A."/>
            <person name="Walsh S.V."/>
            <person name="Warren T."/>
            <person name="Whitehead S."/>
            <person name="Woodward J.R."/>
            <person name="Volckaert G."/>
            <person name="Aert R."/>
            <person name="Robben J."/>
            <person name="Grymonprez B."/>
            <person name="Weltjens I."/>
            <person name="Vanstreels E."/>
            <person name="Rieger M."/>
            <person name="Schaefer M."/>
            <person name="Mueller-Auer S."/>
            <person name="Gabel C."/>
            <person name="Fuchs M."/>
            <person name="Duesterhoeft A."/>
            <person name="Fritzc C."/>
            <person name="Holzer E."/>
            <person name="Moestl D."/>
            <person name="Hilbert H."/>
            <person name="Borzym K."/>
            <person name="Langer I."/>
            <person name="Beck A."/>
            <person name="Lehrach H."/>
            <person name="Reinhardt R."/>
            <person name="Pohl T.M."/>
            <person name="Eger P."/>
            <person name="Zimmermann W."/>
            <person name="Wedler H."/>
            <person name="Wambutt R."/>
            <person name="Purnelle B."/>
            <person name="Goffeau A."/>
            <person name="Cadieu E."/>
            <person name="Dreano S."/>
            <person name="Gloux S."/>
            <person name="Lelaure V."/>
            <person name="Mottier S."/>
            <person name="Galibert F."/>
            <person name="Aves S.J."/>
            <person name="Xiang Z."/>
            <person name="Hunt C."/>
            <person name="Moore K."/>
            <person name="Hurst S.M."/>
            <person name="Lucas M."/>
            <person name="Rochet M."/>
            <person name="Gaillardin C."/>
            <person name="Tallada V.A."/>
            <person name="Garzon A."/>
            <person name="Thode G."/>
            <person name="Daga R.R."/>
            <person name="Cruzado L."/>
            <person name="Jimenez J."/>
            <person name="Sanchez M."/>
            <person name="del Rey F."/>
            <person name="Benito J."/>
            <person name="Dominguez A."/>
            <person name="Revuelta J.L."/>
            <person name="Moreno S."/>
            <person name="Armstrong J."/>
            <person name="Forsburg S.L."/>
            <person name="Cerutti L."/>
            <person name="Lowe T."/>
            <person name="McCombie W.R."/>
            <person name="Paulsen I."/>
            <person name="Potashkin J."/>
            <person name="Shpakovski G.V."/>
            <person name="Ussery D."/>
            <person name="Barrell B.G."/>
            <person name="Nurse P."/>
        </authorList>
    </citation>
    <scope>NUCLEOTIDE SEQUENCE [LARGE SCALE GENOMIC DNA]</scope>
    <source>
        <strain>972 / ATCC 24843</strain>
    </source>
</reference>
<reference key="2">
    <citation type="journal article" date="2006" name="Nat. Biotechnol.">
        <title>ORFeome cloning and global analysis of protein localization in the fission yeast Schizosaccharomyces pombe.</title>
        <authorList>
            <person name="Matsuyama A."/>
            <person name="Arai R."/>
            <person name="Yashiroda Y."/>
            <person name="Shirai A."/>
            <person name="Kamata A."/>
            <person name="Sekido S."/>
            <person name="Kobayashi Y."/>
            <person name="Hashimoto A."/>
            <person name="Hamamoto M."/>
            <person name="Hiraoka Y."/>
            <person name="Horinouchi S."/>
            <person name="Yoshida M."/>
        </authorList>
    </citation>
    <scope>SUBCELLULAR LOCATION [LARGE SCALE ANALYSIS]</scope>
</reference>
<feature type="chain" id="PRO_0000343213" description="Uncharacterized transporter C405.03c">
    <location>
        <begin position="1"/>
        <end position="341"/>
    </location>
</feature>
<feature type="transmembrane region" description="Helical" evidence="1">
    <location>
        <begin position="10"/>
        <end position="30"/>
    </location>
</feature>
<feature type="transmembrane region" description="Helical" evidence="1">
    <location>
        <begin position="42"/>
        <end position="62"/>
    </location>
</feature>
<feature type="transmembrane region" description="Helical" evidence="1">
    <location>
        <begin position="107"/>
        <end position="127"/>
    </location>
</feature>
<feature type="transmembrane region" description="Helical" evidence="1">
    <location>
        <begin position="129"/>
        <end position="149"/>
    </location>
</feature>
<feature type="transmembrane region" description="Helical" evidence="1">
    <location>
        <begin position="155"/>
        <end position="175"/>
    </location>
</feature>
<feature type="transmembrane region" description="Helical" evidence="1">
    <location>
        <begin position="192"/>
        <end position="212"/>
    </location>
</feature>
<feature type="transmembrane region" description="Helical" evidence="1">
    <location>
        <begin position="226"/>
        <end position="246"/>
    </location>
</feature>
<feature type="transmembrane region" description="Helical" evidence="1">
    <location>
        <begin position="263"/>
        <end position="283"/>
    </location>
</feature>
<feature type="transmembrane region" description="Helical" evidence="1">
    <location>
        <begin position="290"/>
        <end position="310"/>
    </location>
</feature>
<feature type="transmembrane region" description="Helical" evidence="1">
    <location>
        <begin position="313"/>
        <end position="333"/>
    </location>
</feature>
<dbReference type="EMBL" id="CU329671">
    <property type="protein sequence ID" value="CAB38602.1"/>
    <property type="molecule type" value="Genomic_DNA"/>
</dbReference>
<dbReference type="PIR" id="T40424">
    <property type="entry name" value="T40424"/>
</dbReference>
<dbReference type="RefSeq" id="NP_596306.1">
    <property type="nucleotide sequence ID" value="NM_001022228.2"/>
</dbReference>
<dbReference type="SMR" id="O94654"/>
<dbReference type="BioGRID" id="277490">
    <property type="interactions" value="1"/>
</dbReference>
<dbReference type="FunCoup" id="O94654">
    <property type="interactions" value="130"/>
</dbReference>
<dbReference type="STRING" id="284812.O94654"/>
<dbReference type="PaxDb" id="4896-SPBC405.03c.1"/>
<dbReference type="EnsemblFungi" id="SPBC405.03c.1">
    <property type="protein sequence ID" value="SPBC405.03c.1:pep"/>
    <property type="gene ID" value="SPBC405.03c"/>
</dbReference>
<dbReference type="KEGG" id="spo:2540974"/>
<dbReference type="PomBase" id="SPBC405.03c"/>
<dbReference type="VEuPathDB" id="FungiDB:SPBC405.03c"/>
<dbReference type="eggNOG" id="KOG2765">
    <property type="taxonomic scope" value="Eukaryota"/>
</dbReference>
<dbReference type="HOGENOM" id="CLU_026578_1_0_1"/>
<dbReference type="InParanoid" id="O94654"/>
<dbReference type="OMA" id="MYGVYTI"/>
<dbReference type="PhylomeDB" id="O94654"/>
<dbReference type="PRO" id="PR:O94654"/>
<dbReference type="Proteomes" id="UP000002485">
    <property type="component" value="Chromosome II"/>
</dbReference>
<dbReference type="GO" id="GO:0000329">
    <property type="term" value="C:fungal-type vacuole membrane"/>
    <property type="evidence" value="ECO:0007005"/>
    <property type="project" value="PomBase"/>
</dbReference>
<dbReference type="GO" id="GO:0005794">
    <property type="term" value="C:Golgi apparatus"/>
    <property type="evidence" value="ECO:0007005"/>
    <property type="project" value="PomBase"/>
</dbReference>
<dbReference type="GO" id="GO:0000139">
    <property type="term" value="C:Golgi membrane"/>
    <property type="evidence" value="ECO:0007669"/>
    <property type="project" value="UniProtKB-SubCell"/>
</dbReference>
<dbReference type="GO" id="GO:0022857">
    <property type="term" value="F:transmembrane transporter activity"/>
    <property type="evidence" value="ECO:0000255"/>
    <property type="project" value="PomBase"/>
</dbReference>
<dbReference type="PANTHER" id="PTHR23051:SF0">
    <property type="entry name" value="SOLUTE CARRIER FAMILY 35 MEMBER F5"/>
    <property type="match status" value="1"/>
</dbReference>
<dbReference type="PANTHER" id="PTHR23051">
    <property type="entry name" value="SOLUTE CARRIER FAMILY 35, MEMBER F5"/>
    <property type="match status" value="1"/>
</dbReference>
<dbReference type="SUPFAM" id="SSF103481">
    <property type="entry name" value="Multidrug resistance efflux transporter EmrE"/>
    <property type="match status" value="1"/>
</dbReference>
<sequence>MVLQAIGKHALGVVLLLFVVFLWLISSFLTSSLLDDDNFFSPFLITYINTGTFVFYLIPWYFSEKKTRKHRLMSELSMYESVHDSSFNLGTRPNSPLGFRQTAYLSLGFCIIWFAANYFSNSSLGFTNVASFTIISSMSGFFTLGLGTIVNVERFTLSKLLALMASVGGVIIVVTQDAKQADLNDSPPSRPALGNAYALLAALLYGCYSVMVKFHITEESCVSTRLFFGLVGLFDLILLWPFLIILHLYGVERFSLPSTTAGLIVLIINASITFVSDYLWVIAMLMTSPLLVTVGMSLSIPLALFFDILLKGHYLNFSLILGSLLVFAGFIVVNYNQQNII</sequence>
<evidence type="ECO:0000255" key="1"/>
<evidence type="ECO:0000269" key="2">
    <source>
    </source>
</evidence>
<evidence type="ECO:0000305" key="3"/>
<comment type="subcellular location">
    <subcellularLocation>
        <location evidence="2">Vacuole membrane</location>
        <topology evidence="2">Multi-pass membrane protein</topology>
    </subcellularLocation>
    <subcellularLocation>
        <location evidence="2">Golgi apparatus membrane</location>
        <topology evidence="2">Multi-pass membrane protein</topology>
    </subcellularLocation>
</comment>
<comment type="similarity">
    <text evidence="3">Belongs to the TPT transporter family.</text>
</comment>
<proteinExistence type="inferred from homology"/>
<keyword id="KW-0333">Golgi apparatus</keyword>
<keyword id="KW-0472">Membrane</keyword>
<keyword id="KW-1185">Reference proteome</keyword>
<keyword id="KW-0812">Transmembrane</keyword>
<keyword id="KW-1133">Transmembrane helix</keyword>
<keyword id="KW-0926">Vacuole</keyword>
<name>YGF3_SCHPO</name>
<organism>
    <name type="scientific">Schizosaccharomyces pombe (strain 972 / ATCC 24843)</name>
    <name type="common">Fission yeast</name>
    <dbReference type="NCBI Taxonomy" id="284812"/>
    <lineage>
        <taxon>Eukaryota</taxon>
        <taxon>Fungi</taxon>
        <taxon>Dikarya</taxon>
        <taxon>Ascomycota</taxon>
        <taxon>Taphrinomycotina</taxon>
        <taxon>Schizosaccharomycetes</taxon>
        <taxon>Schizosaccharomycetales</taxon>
        <taxon>Schizosaccharomycetaceae</taxon>
        <taxon>Schizosaccharomyces</taxon>
    </lineage>
</organism>
<gene>
    <name type="ORF">SPBC405.03c</name>
</gene>